<dbReference type="EMBL" id="CY006836">
    <property type="protein sequence ID" value="ABC02267.1"/>
    <property type="molecule type" value="Genomic_RNA"/>
</dbReference>
<dbReference type="SMR" id="Q2PIK4"/>
<dbReference type="Proteomes" id="UP000007792">
    <property type="component" value="Genome"/>
</dbReference>
<dbReference type="GO" id="GO:0042025">
    <property type="term" value="C:host cell nucleus"/>
    <property type="evidence" value="ECO:0007669"/>
    <property type="project" value="UniProtKB-SubCell"/>
</dbReference>
<dbReference type="GO" id="GO:0016020">
    <property type="term" value="C:membrane"/>
    <property type="evidence" value="ECO:0007669"/>
    <property type="project" value="UniProtKB-KW"/>
</dbReference>
<dbReference type="GO" id="GO:0055036">
    <property type="term" value="C:virion membrane"/>
    <property type="evidence" value="ECO:0007669"/>
    <property type="project" value="UniProtKB-SubCell"/>
</dbReference>
<dbReference type="GO" id="GO:0003723">
    <property type="term" value="F:RNA binding"/>
    <property type="evidence" value="ECO:0007669"/>
    <property type="project" value="UniProtKB-UniRule"/>
</dbReference>
<dbReference type="GO" id="GO:0039660">
    <property type="term" value="F:structural constituent of virion"/>
    <property type="evidence" value="ECO:0007669"/>
    <property type="project" value="UniProtKB-UniRule"/>
</dbReference>
<dbReference type="GO" id="GO:0046761">
    <property type="term" value="P:viral budding from plasma membrane"/>
    <property type="evidence" value="ECO:0007669"/>
    <property type="project" value="UniProtKB-UniRule"/>
</dbReference>
<dbReference type="FunFam" id="1.10.10.180:FF:000001">
    <property type="entry name" value="Matrix protein 1"/>
    <property type="match status" value="1"/>
</dbReference>
<dbReference type="FunFam" id="1.20.91.10:FF:000001">
    <property type="entry name" value="Matrix protein 1"/>
    <property type="match status" value="1"/>
</dbReference>
<dbReference type="Gene3D" id="1.10.10.180">
    <property type="match status" value="1"/>
</dbReference>
<dbReference type="Gene3D" id="1.20.91.10">
    <property type="match status" value="1"/>
</dbReference>
<dbReference type="HAMAP" id="MF_04068">
    <property type="entry name" value="INFV_M1"/>
    <property type="match status" value="1"/>
</dbReference>
<dbReference type="InterPro" id="IPR036039">
    <property type="entry name" value="Flu_matrix_M1"/>
</dbReference>
<dbReference type="InterPro" id="IPR013188">
    <property type="entry name" value="Flu_matrix_M1_C"/>
</dbReference>
<dbReference type="InterPro" id="IPR001561">
    <property type="entry name" value="Flu_matrix_M1_N"/>
</dbReference>
<dbReference type="InterPro" id="IPR015423">
    <property type="entry name" value="Flu_matrix_M1_N_sub1"/>
</dbReference>
<dbReference type="InterPro" id="IPR015799">
    <property type="entry name" value="Flu_matrix_M1_N_sub2"/>
</dbReference>
<dbReference type="InterPro" id="IPR037533">
    <property type="entry name" value="INFV_M1"/>
</dbReference>
<dbReference type="Pfam" id="PF00598">
    <property type="entry name" value="Flu_M1"/>
    <property type="match status" value="1"/>
</dbReference>
<dbReference type="Pfam" id="PF08289">
    <property type="entry name" value="Flu_M1_C"/>
    <property type="match status" value="1"/>
</dbReference>
<dbReference type="SMART" id="SM00759">
    <property type="entry name" value="Flu_M1_C"/>
    <property type="match status" value="1"/>
</dbReference>
<dbReference type="SUPFAM" id="SSF48145">
    <property type="entry name" value="Influenza virus matrix protein M1"/>
    <property type="match status" value="1"/>
</dbReference>
<proteinExistence type="inferred from homology"/>
<accession>Q2PIK4</accession>
<name>M1_I76A6</name>
<organism>
    <name type="scientific">Influenza A virus (strain A/Memphis/110/1976 H3N2)</name>
    <dbReference type="NCBI Taxonomy" id="383581"/>
    <lineage>
        <taxon>Viruses</taxon>
        <taxon>Riboviria</taxon>
        <taxon>Orthornavirae</taxon>
        <taxon>Negarnaviricota</taxon>
        <taxon>Polyploviricotina</taxon>
        <taxon>Insthoviricetes</taxon>
        <taxon>Articulavirales</taxon>
        <taxon>Orthomyxoviridae</taxon>
        <taxon>Alphainfluenzavirus</taxon>
        <taxon>Alphainfluenzavirus influenzae</taxon>
        <taxon>Influenza A virus</taxon>
    </lineage>
</organism>
<protein>
    <recommendedName>
        <fullName evidence="1">Matrix protein 1</fullName>
        <shortName evidence="1">M1</shortName>
    </recommendedName>
</protein>
<gene>
    <name evidence="1" type="primary">M</name>
</gene>
<organismHost>
    <name type="scientific">Aves</name>
    <dbReference type="NCBI Taxonomy" id="8782"/>
</organismHost>
<organismHost>
    <name type="scientific">Cetacea</name>
    <name type="common">whales</name>
    <dbReference type="NCBI Taxonomy" id="9721"/>
</organismHost>
<organismHost>
    <name type="scientific">Homo sapiens</name>
    <name type="common">Human</name>
    <dbReference type="NCBI Taxonomy" id="9606"/>
</organismHost>
<organismHost>
    <name type="scientific">Phocidae</name>
    <name type="common">true seals</name>
    <dbReference type="NCBI Taxonomy" id="9709"/>
</organismHost>
<organismHost>
    <name type="scientific">Sus scrofa</name>
    <name type="common">Pig</name>
    <dbReference type="NCBI Taxonomy" id="9823"/>
</organismHost>
<feature type="chain" id="PRO_0000326297" description="Matrix protein 1">
    <location>
        <begin position="1"/>
        <end position="252"/>
    </location>
</feature>
<feature type="region of interest" description="Membrane-binding" evidence="1">
    <location>
        <begin position="1"/>
        <end position="164"/>
    </location>
</feature>
<feature type="region of interest" description="RNP-binding" evidence="1">
    <location>
        <begin position="165"/>
        <end position="252"/>
    </location>
</feature>
<feature type="short sequence motif" description="Nuclear localization signal" evidence="1">
    <location>
        <begin position="101"/>
        <end position="105"/>
    </location>
</feature>
<keyword id="KW-0025">Alternative splicing</keyword>
<keyword id="KW-1048">Host nucleus</keyword>
<keyword id="KW-0472">Membrane</keyword>
<keyword id="KW-0694">RNA-binding</keyword>
<keyword id="KW-0468">Viral matrix protein</keyword>
<keyword id="KW-0946">Virion</keyword>
<sequence>MSLLTEVETYVLSIVPSGPLKAEIAQRLEDVFAGKNTDLEALMEWLKTRPILSPLTKGILGFVFTLTVPSERGLQRRRFVQNALNGNGDPNNMDRAVKLYRKLKREITFHGAKEIALSYSAGALASCMGLIYNRMGAVTTEVAFGLVCATCEQIADSQHRSHRQMVATTNPLIRHENRMVLASTTAKAMEQMAGSSEQAAEAMEVASQARQMVQAMRAIGTHPSSSAGLKDDLLENLQAYQKRMGVQMQRFK</sequence>
<evidence type="ECO:0000255" key="1">
    <source>
        <dbReference type="HAMAP-Rule" id="MF_04068"/>
    </source>
</evidence>
<reference key="1">
    <citation type="submission" date="2005-12" db="EMBL/GenBank/DDBJ databases">
        <title>The NIAID influenza genome sequencing project.</title>
        <authorList>
            <person name="Ghedin E."/>
            <person name="Spiro D."/>
            <person name="Miller N."/>
            <person name="Zaborsky J."/>
            <person name="Feldblyum T."/>
            <person name="Subbu V."/>
            <person name="Shumway M."/>
            <person name="Sparenborg J."/>
            <person name="Groveman L."/>
            <person name="Halpin R."/>
            <person name="Sitz J."/>
            <person name="Koo H."/>
            <person name="Salzberg S.L."/>
            <person name="Webster R.G."/>
            <person name="Hoffmann E."/>
            <person name="Krauss S."/>
            <person name="Naeve C."/>
            <person name="Bao Y."/>
            <person name="Bolotov P."/>
            <person name="Dernovoy D."/>
            <person name="Kiryutin B."/>
            <person name="Lipman D.J."/>
            <person name="Tatusova T."/>
        </authorList>
    </citation>
    <scope>NUCLEOTIDE SEQUENCE [GENOMIC RNA]</scope>
</reference>
<comment type="function">
    <text evidence="1">Plays critical roles in virus replication, from virus entry and uncoating to assembly and budding of the virus particle. M1 binding to ribonucleocapsids (RNPs) in nucleus seems to inhibit viral transcription. Interaction of viral NEP with M1-RNP is thought to promote nuclear export of the complex, which is targeted to the virion assembly site at the apical plasma membrane in polarized epithelial cells. Interactions with NA and HA may bring M1, a non-raft-associated protein, into lipid rafts. Forms a continuous shell on the inner side of the lipid bilayer in virion, where it binds the RNP. During virus entry into cell, the M2 ion channel acidifies the internal virion core, inducing M1 dissociation from the RNP. M1-free RNPs are transported to the nucleus, where viral transcription and replication can take place.</text>
</comment>
<comment type="function">
    <text evidence="1">Determines the virion's shape: spherical or filamentous. Clinical isolates of influenza are characterized by the presence of significant proportion of filamentous virions, whereas after multiple passage on eggs or cell culture, virions have only spherical morphology. Filamentous virions are thought to be important to infect neighboring cells, and spherical virions more suited to spread through aerosol between hosts organisms.</text>
</comment>
<comment type="subunit">
    <text evidence="1">Homodimer and homomultimer. Interacts with NEP. Binds ribonucleocapsid by both interacting with genomic RNA and NP protein. May interact with HA and NA. Cannot bind NP without genomic RNA.</text>
</comment>
<comment type="subcellular location">
    <subcellularLocation>
        <location evidence="1">Virion membrane</location>
        <topology evidence="1">Peripheral membrane protein</topology>
        <orientation evidence="1">Cytoplasmic side</orientation>
    </subcellularLocation>
    <subcellularLocation>
        <location evidence="1">Host nucleus</location>
    </subcellularLocation>
</comment>
<comment type="alternative products">
    <event type="alternative splicing"/>
    <isoform>
        <id>Q2PIK4-1</id>
        <name>M1</name>
        <sequence type="displayed"/>
    </isoform>
    <isoform>
        <id>Q2PIK5-1</id>
        <name>M2</name>
        <sequence type="external"/>
    </isoform>
    <text>Only the first 9 residues are shared by the 2 isoforms.</text>
</comment>
<comment type="miscellaneous">
    <text evidence="1">Most abundant protein in virion. When expressed alone can form virus-like particles in transfected cells.</text>
</comment>
<comment type="similarity">
    <text evidence="1">Belongs to the influenza viruses Matrix protein M1 family.</text>
</comment>